<protein>
    <recommendedName>
        <fullName evidence="1">ATP synthase subunit a</fullName>
    </recommendedName>
    <alternativeName>
        <fullName evidence="1">ATP synthase F0 sector subunit a</fullName>
    </alternativeName>
    <alternativeName>
        <fullName evidence="1">F-ATPase subunit 6</fullName>
    </alternativeName>
</protein>
<reference key="1">
    <citation type="journal article" date="2005" name="Nat. Biotechnol.">
        <title>Complete genome sequence of the acetic acid bacterium Gluconobacter oxydans.</title>
        <authorList>
            <person name="Prust C."/>
            <person name="Hoffmeister M."/>
            <person name="Liesegang H."/>
            <person name="Wiezer A."/>
            <person name="Fricke W.F."/>
            <person name="Ehrenreich A."/>
            <person name="Gottschalk G."/>
            <person name="Deppenmeier U."/>
        </authorList>
    </citation>
    <scope>NUCLEOTIDE SEQUENCE [LARGE SCALE GENOMIC DNA]</scope>
    <source>
        <strain>621H</strain>
    </source>
</reference>
<dbReference type="EMBL" id="CP000009">
    <property type="protein sequence ID" value="AAW60881.1"/>
    <property type="molecule type" value="Genomic_DNA"/>
</dbReference>
<dbReference type="RefSeq" id="WP_011252673.1">
    <property type="nucleotide sequence ID" value="NZ_LT900338.1"/>
</dbReference>
<dbReference type="SMR" id="Q5FRW5"/>
<dbReference type="STRING" id="290633.GOX1113"/>
<dbReference type="KEGG" id="gox:GOX1113"/>
<dbReference type="eggNOG" id="COG0356">
    <property type="taxonomic scope" value="Bacteria"/>
</dbReference>
<dbReference type="HOGENOM" id="CLU_041018_0_2_5"/>
<dbReference type="Proteomes" id="UP000006375">
    <property type="component" value="Chromosome"/>
</dbReference>
<dbReference type="GO" id="GO:0005886">
    <property type="term" value="C:plasma membrane"/>
    <property type="evidence" value="ECO:0007669"/>
    <property type="project" value="UniProtKB-SubCell"/>
</dbReference>
<dbReference type="GO" id="GO:0045259">
    <property type="term" value="C:proton-transporting ATP synthase complex"/>
    <property type="evidence" value="ECO:0007669"/>
    <property type="project" value="UniProtKB-KW"/>
</dbReference>
<dbReference type="GO" id="GO:0046933">
    <property type="term" value="F:proton-transporting ATP synthase activity, rotational mechanism"/>
    <property type="evidence" value="ECO:0007669"/>
    <property type="project" value="UniProtKB-UniRule"/>
</dbReference>
<dbReference type="CDD" id="cd00310">
    <property type="entry name" value="ATP-synt_Fo_a_6"/>
    <property type="match status" value="1"/>
</dbReference>
<dbReference type="Gene3D" id="1.20.120.220">
    <property type="entry name" value="ATP synthase, F0 complex, subunit A"/>
    <property type="match status" value="1"/>
</dbReference>
<dbReference type="HAMAP" id="MF_01393">
    <property type="entry name" value="ATP_synth_a_bact"/>
    <property type="match status" value="1"/>
</dbReference>
<dbReference type="InterPro" id="IPR000568">
    <property type="entry name" value="ATP_synth_F0_asu"/>
</dbReference>
<dbReference type="InterPro" id="IPR023011">
    <property type="entry name" value="ATP_synth_F0_asu_AS"/>
</dbReference>
<dbReference type="InterPro" id="IPR045083">
    <property type="entry name" value="ATP_synth_F0_asu_bact/mt"/>
</dbReference>
<dbReference type="InterPro" id="IPR035908">
    <property type="entry name" value="F0_ATP_A_sf"/>
</dbReference>
<dbReference type="NCBIfam" id="TIGR01131">
    <property type="entry name" value="ATP_synt_6_or_A"/>
    <property type="match status" value="1"/>
</dbReference>
<dbReference type="NCBIfam" id="NF004482">
    <property type="entry name" value="PRK05815.2-4"/>
    <property type="match status" value="1"/>
</dbReference>
<dbReference type="PANTHER" id="PTHR11410">
    <property type="entry name" value="ATP SYNTHASE SUBUNIT A"/>
    <property type="match status" value="1"/>
</dbReference>
<dbReference type="PANTHER" id="PTHR11410:SF0">
    <property type="entry name" value="ATP SYNTHASE SUBUNIT A"/>
    <property type="match status" value="1"/>
</dbReference>
<dbReference type="Pfam" id="PF00119">
    <property type="entry name" value="ATP-synt_A"/>
    <property type="match status" value="1"/>
</dbReference>
<dbReference type="PRINTS" id="PR00123">
    <property type="entry name" value="ATPASEA"/>
</dbReference>
<dbReference type="SUPFAM" id="SSF81336">
    <property type="entry name" value="F1F0 ATP synthase subunit A"/>
    <property type="match status" value="1"/>
</dbReference>
<dbReference type="PROSITE" id="PS00449">
    <property type="entry name" value="ATPASE_A"/>
    <property type="match status" value="1"/>
</dbReference>
<gene>
    <name evidence="1" type="primary">atpB</name>
    <name type="ordered locus">GOX1113</name>
</gene>
<name>ATP6_GLUOX</name>
<accession>Q5FRW5</accession>
<organism>
    <name type="scientific">Gluconobacter oxydans (strain 621H)</name>
    <name type="common">Gluconobacter suboxydans</name>
    <dbReference type="NCBI Taxonomy" id="290633"/>
    <lineage>
        <taxon>Bacteria</taxon>
        <taxon>Pseudomonadati</taxon>
        <taxon>Pseudomonadota</taxon>
        <taxon>Alphaproteobacteria</taxon>
        <taxon>Acetobacterales</taxon>
        <taxon>Acetobacteraceae</taxon>
        <taxon>Gluconobacter</taxon>
    </lineage>
</organism>
<proteinExistence type="inferred from homology"/>
<evidence type="ECO:0000255" key="1">
    <source>
        <dbReference type="HAMAP-Rule" id="MF_01393"/>
    </source>
</evidence>
<feature type="chain" id="PRO_0000362317" description="ATP synthase subunit a">
    <location>
        <begin position="1"/>
        <end position="249"/>
    </location>
</feature>
<feature type="transmembrane region" description="Helical" evidence="1">
    <location>
        <begin position="30"/>
        <end position="50"/>
    </location>
</feature>
<feature type="transmembrane region" description="Helical" evidence="1">
    <location>
        <begin position="86"/>
        <end position="106"/>
    </location>
</feature>
<feature type="transmembrane region" description="Helical" evidence="1">
    <location>
        <begin position="115"/>
        <end position="135"/>
    </location>
</feature>
<feature type="transmembrane region" description="Helical" evidence="1">
    <location>
        <begin position="146"/>
        <end position="166"/>
    </location>
</feature>
<feature type="transmembrane region" description="Helical" evidence="1">
    <location>
        <begin position="191"/>
        <end position="211"/>
    </location>
</feature>
<feature type="transmembrane region" description="Helical" evidence="1">
    <location>
        <begin position="218"/>
        <end position="238"/>
    </location>
</feature>
<comment type="function">
    <text evidence="1">Key component of the proton channel; it plays a direct role in the translocation of protons across the membrane.</text>
</comment>
<comment type="subunit">
    <text evidence="1">F-type ATPases have 2 components, CF(1) - the catalytic core - and CF(0) - the membrane proton channel. CF(1) has five subunits: alpha(3), beta(3), gamma(1), delta(1), epsilon(1). CF(0) has three main subunits: a(1), b(2) and c(9-12). The alpha and beta chains form an alternating ring which encloses part of the gamma chain. CF(1) is attached to CF(0) by a central stalk formed by the gamma and epsilon chains, while a peripheral stalk is formed by the delta and b chains.</text>
</comment>
<comment type="subcellular location">
    <subcellularLocation>
        <location evidence="1">Cell inner membrane</location>
        <topology evidence="1">Multi-pass membrane protein</topology>
    </subcellularLocation>
</comment>
<comment type="similarity">
    <text evidence="1">Belongs to the ATPase A chain family.</text>
</comment>
<keyword id="KW-0066">ATP synthesis</keyword>
<keyword id="KW-0997">Cell inner membrane</keyword>
<keyword id="KW-1003">Cell membrane</keyword>
<keyword id="KW-0138">CF(0)</keyword>
<keyword id="KW-0375">Hydrogen ion transport</keyword>
<keyword id="KW-0406">Ion transport</keyword>
<keyword id="KW-0472">Membrane</keyword>
<keyword id="KW-1185">Reference proteome</keyword>
<keyword id="KW-0812">Transmembrane</keyword>
<keyword id="KW-1133">Transmembrane helix</keyword>
<keyword id="KW-0813">Transport</keyword>
<sequence>MAAGSTIDALGQFELHPVLGHLGEALRFSQSPLFMLIAAAVVLVFLYVGMRPAAVVPGRLQAAAEISYDFVHDLAVSTIGENGATFFPFVFAIFFFILAGNYLGLLPFSFTYTSHIAVTFGLAIMVFIISILASIRFQGVGFLKHFLPAGTPVWLAPLLVPIEIISFLSRPVSLSIRLFANMVAGHVLLEVFAGFTIMLAGLGAFGHVLAIAPIAINIALTALELLVGVLQAYVFAILTCIYLREAVAH</sequence>